<protein>
    <recommendedName>
        <fullName>Uncharacterized protein MJECL32</fullName>
    </recommendedName>
</protein>
<gene>
    <name type="ordered locus">MJECL32</name>
</gene>
<geneLocation type="plasmid">
    <name>large ECE</name>
</geneLocation>
<organism>
    <name type="scientific">Methanocaldococcus jannaschii (strain ATCC 43067 / DSM 2661 / JAL-1 / JCM 10045 / NBRC 100440)</name>
    <name type="common">Methanococcus jannaschii</name>
    <dbReference type="NCBI Taxonomy" id="243232"/>
    <lineage>
        <taxon>Archaea</taxon>
        <taxon>Methanobacteriati</taxon>
        <taxon>Methanobacteriota</taxon>
        <taxon>Methanomada group</taxon>
        <taxon>Methanococci</taxon>
        <taxon>Methanococcales</taxon>
        <taxon>Methanocaldococcaceae</taxon>
        <taxon>Methanocaldococcus</taxon>
    </lineage>
</organism>
<proteinExistence type="predicted"/>
<sequence>MGKELDNRTLDFYFEKYGKKKTSTEPSYKDIIEYITALISENLEDYQSQHTKLINIILNLVYPIKYFPHHLYDLGYRPKKGSTLGVRIVLDGIYYTKNGNPAEITPDVILVNDNDTHVLIFECKSKSIKKEQLEKYLKLKENLHVIINKGYISVTKNPRLYKSDVSYMSFDDLTTHPVLKDTEDIQILKVSPGEISLERGNYENQKLNKIFPITWGEKEKPSYDLLICDAENDKEGSLFKILILRELVSMALSGHDEPEVGMVFSKKIILPKGEYSLESLKEDDFKEIENIIQKLCKKKCIIDKENKLLRVDKDIVILPENKPLNANVLKLIDALNISINMDSLVEKEFTVGTIMDALYRSTSISIIDYFYKDYKNIVSKRIEETLKLFSNRNLKGYLKKVSRKWRIKVIKDKRMARKFKESCKEEIGAIKSWQTTLD</sequence>
<feature type="chain" id="PRO_0000107516" description="Uncharacterized protein MJECL32">
    <location>
        <begin position="1"/>
        <end position="438"/>
    </location>
</feature>
<accession>Q60289</accession>
<keyword id="KW-0614">Plasmid</keyword>
<keyword id="KW-1185">Reference proteome</keyword>
<dbReference type="EMBL" id="L77118">
    <property type="protein sequence ID" value="AAC37101.1"/>
    <property type="molecule type" value="Genomic_DNA"/>
</dbReference>
<dbReference type="PIR" id="G64513">
    <property type="entry name" value="G64513"/>
</dbReference>
<dbReference type="RefSeq" id="WP_010890079.1">
    <property type="nucleotide sequence ID" value="NC_001732.1"/>
</dbReference>
<dbReference type="FunCoup" id="Q60289">
    <property type="interactions" value="1"/>
</dbReference>
<dbReference type="PaxDb" id="243232-MJ_ECL32"/>
<dbReference type="EnsemblBacteria" id="AAC37101">
    <property type="protein sequence ID" value="AAC37101"/>
    <property type="gene ID" value="MJ_ECL32"/>
</dbReference>
<dbReference type="GeneID" id="1450814"/>
<dbReference type="KEGG" id="mja:MJ_ECL32"/>
<dbReference type="eggNOG" id="arCOG06585">
    <property type="taxonomic scope" value="Archaea"/>
</dbReference>
<dbReference type="HOGENOM" id="CLU_644987_0_0_2"/>
<dbReference type="InParanoid" id="Q60289"/>
<dbReference type="OrthoDB" id="100287at2157"/>
<dbReference type="Proteomes" id="UP000000805">
    <property type="component" value="Plasmid pDSM2661_1"/>
</dbReference>
<reference key="1">
    <citation type="journal article" date="1996" name="Science">
        <title>Complete genome sequence of the methanogenic archaeon, Methanococcus jannaschii.</title>
        <authorList>
            <person name="Bult C.J."/>
            <person name="White O."/>
            <person name="Olsen G.J."/>
            <person name="Zhou L."/>
            <person name="Fleischmann R.D."/>
            <person name="Sutton G.G."/>
            <person name="Blake J.A."/>
            <person name="FitzGerald L.M."/>
            <person name="Clayton R.A."/>
            <person name="Gocayne J.D."/>
            <person name="Kerlavage A.R."/>
            <person name="Dougherty B.A."/>
            <person name="Tomb J.-F."/>
            <person name="Adams M.D."/>
            <person name="Reich C.I."/>
            <person name="Overbeek R."/>
            <person name="Kirkness E.F."/>
            <person name="Weinstock K.G."/>
            <person name="Merrick J.M."/>
            <person name="Glodek A."/>
            <person name="Scott J.L."/>
            <person name="Geoghagen N.S.M."/>
            <person name="Weidman J.F."/>
            <person name="Fuhrmann J.L."/>
            <person name="Nguyen D."/>
            <person name="Utterback T.R."/>
            <person name="Kelley J.M."/>
            <person name="Peterson J.D."/>
            <person name="Sadow P.W."/>
            <person name="Hanna M.C."/>
            <person name="Cotton M.D."/>
            <person name="Roberts K.M."/>
            <person name="Hurst M.A."/>
            <person name="Kaine B.P."/>
            <person name="Borodovsky M."/>
            <person name="Klenk H.-P."/>
            <person name="Fraser C.M."/>
            <person name="Smith H.O."/>
            <person name="Woese C.R."/>
            <person name="Venter J.C."/>
        </authorList>
    </citation>
    <scope>NUCLEOTIDE SEQUENCE [LARGE SCALE GENOMIC DNA]</scope>
    <source>
        <strain>ATCC 43067 / DSM 2661 / JAL-1 / JCM 10045 / NBRC 100440</strain>
    </source>
</reference>
<name>Y3532_METJA</name>